<name>RLP24_PONAB</name>
<evidence type="ECO:0000250" key="1">
    <source>
        <dbReference type="UniProtKB" id="Q07915"/>
    </source>
</evidence>
<evidence type="ECO:0000250" key="2">
    <source>
        <dbReference type="UniProtKB" id="Q9UHA3"/>
    </source>
</evidence>
<evidence type="ECO:0000305" key="3"/>
<dbReference type="EMBL" id="CR857358">
    <property type="protein sequence ID" value="CAH89653.1"/>
    <property type="molecule type" value="mRNA"/>
</dbReference>
<dbReference type="RefSeq" id="NP_001127181.1">
    <property type="nucleotide sequence ID" value="NM_001133709.2"/>
</dbReference>
<dbReference type="SMR" id="Q5RF04"/>
<dbReference type="FunCoup" id="Q5RF04">
    <property type="interactions" value="2536"/>
</dbReference>
<dbReference type="STRING" id="9601.ENSPPYP00000007364"/>
<dbReference type="Ensembl" id="ENSPPYT00000007666.3">
    <property type="protein sequence ID" value="ENSPPYP00000007364.2"/>
    <property type="gene ID" value="ENSPPYG00000006495.3"/>
</dbReference>
<dbReference type="GeneID" id="100174234"/>
<dbReference type="KEGG" id="pon:100174234"/>
<dbReference type="CTD" id="51187"/>
<dbReference type="eggNOG" id="KOG1723">
    <property type="taxonomic scope" value="Eukaryota"/>
</dbReference>
<dbReference type="GeneTree" id="ENSGT00950000183105"/>
<dbReference type="HOGENOM" id="CLU_089419_2_2_1"/>
<dbReference type="InParanoid" id="Q5RF04"/>
<dbReference type="OMA" id="TCYFCSG"/>
<dbReference type="OrthoDB" id="9525201at2759"/>
<dbReference type="TreeFam" id="TF314926"/>
<dbReference type="Proteomes" id="UP000001595">
    <property type="component" value="Chromosome 15"/>
</dbReference>
<dbReference type="GO" id="GO:0005730">
    <property type="term" value="C:nucleolus"/>
    <property type="evidence" value="ECO:0007669"/>
    <property type="project" value="UniProtKB-SubCell"/>
</dbReference>
<dbReference type="GO" id="GO:0005654">
    <property type="term" value="C:nucleoplasm"/>
    <property type="evidence" value="ECO:0007669"/>
    <property type="project" value="Ensembl"/>
</dbReference>
<dbReference type="GO" id="GO:0003735">
    <property type="term" value="F:structural constituent of ribosome"/>
    <property type="evidence" value="ECO:0007669"/>
    <property type="project" value="InterPro"/>
</dbReference>
<dbReference type="GO" id="GO:0042273">
    <property type="term" value="P:ribosomal large subunit biogenesis"/>
    <property type="evidence" value="ECO:0007669"/>
    <property type="project" value="TreeGrafter"/>
</dbReference>
<dbReference type="CDD" id="cd00472">
    <property type="entry name" value="Ribosomal_L24e_L24"/>
    <property type="match status" value="1"/>
</dbReference>
<dbReference type="FunFam" id="2.30.170.20:FF:000001">
    <property type="entry name" value="probable ribosome biogenesis protein RLP24"/>
    <property type="match status" value="1"/>
</dbReference>
<dbReference type="Gene3D" id="2.30.170.20">
    <property type="entry name" value="Ribosomal protein L24e"/>
    <property type="match status" value="1"/>
</dbReference>
<dbReference type="InterPro" id="IPR038630">
    <property type="entry name" value="L24e/L24_sf"/>
</dbReference>
<dbReference type="InterPro" id="IPR056366">
    <property type="entry name" value="Ribosomal_eL24"/>
</dbReference>
<dbReference type="InterPro" id="IPR000988">
    <property type="entry name" value="Ribosomal_eL24-rel_N"/>
</dbReference>
<dbReference type="InterPro" id="IPR023442">
    <property type="entry name" value="Ribosomal_eL24_CS"/>
</dbReference>
<dbReference type="InterPro" id="IPR011017">
    <property type="entry name" value="TRASH_dom"/>
</dbReference>
<dbReference type="PANTHER" id="PTHR10792">
    <property type="entry name" value="60S RIBOSOMAL PROTEIN L24"/>
    <property type="match status" value="1"/>
</dbReference>
<dbReference type="PANTHER" id="PTHR10792:SF8">
    <property type="entry name" value="RIBOSOME BIOGENESIS PROTEIN RLP24-RELATED"/>
    <property type="match status" value="1"/>
</dbReference>
<dbReference type="Pfam" id="PF01246">
    <property type="entry name" value="Ribosomal_L24e"/>
    <property type="match status" value="1"/>
</dbReference>
<dbReference type="SMART" id="SM00746">
    <property type="entry name" value="TRASH"/>
    <property type="match status" value="1"/>
</dbReference>
<dbReference type="SUPFAM" id="SSF57716">
    <property type="entry name" value="Glucocorticoid receptor-like (DNA-binding domain)"/>
    <property type="match status" value="1"/>
</dbReference>
<dbReference type="PROSITE" id="PS01073">
    <property type="entry name" value="RIBOSOMAL_L24E"/>
    <property type="match status" value="1"/>
</dbReference>
<feature type="chain" id="PRO_0000265741" description="Probable ribosome biogenesis protein RLP24">
    <location>
        <begin position="1"/>
        <end position="163"/>
    </location>
</feature>
<comment type="function">
    <text evidence="1">Involved in the biogenesis of the 60S ribosomal subunit. Ensures the docking of GTPBP4/NOG1 to pre-60S particles (By similarity).</text>
</comment>
<comment type="subunit">
    <text evidence="1 2">Associated with nucleolar and cytoplasmic pre-60S particles (By similarity). At the end of biogenesis it dissociates from cytoplasmic pre-60S particles and is likely to be exchanged for its ribosomal homolog, RPL24 (By similarity).</text>
</comment>
<comment type="subcellular location">
    <subcellularLocation>
        <location evidence="2">Nucleus</location>
        <location evidence="2">Nucleolus</location>
    </subcellularLocation>
</comment>
<comment type="similarity">
    <text evidence="3">Belongs to the eukaryotic ribosomal protein eL24 family.</text>
</comment>
<reference key="1">
    <citation type="submission" date="2004-11" db="EMBL/GenBank/DDBJ databases">
        <authorList>
            <consortium name="The German cDNA consortium"/>
        </authorList>
    </citation>
    <scope>NUCLEOTIDE SEQUENCE [LARGE SCALE MRNA]</scope>
    <source>
        <tissue>Kidney</tissue>
    </source>
</reference>
<protein>
    <recommendedName>
        <fullName>Probable ribosome biogenesis protein RLP24</fullName>
    </recommendedName>
    <alternativeName>
        <fullName>Ribosomal L24 domain-containing protein 1</fullName>
    </alternativeName>
    <alternativeName>
        <fullName>Ribosomal protein L24-like</fullName>
    </alternativeName>
</protein>
<accession>Q5RF04</accession>
<organism>
    <name type="scientific">Pongo abelii</name>
    <name type="common">Sumatran orangutan</name>
    <name type="synonym">Pongo pygmaeus abelii</name>
    <dbReference type="NCBI Taxonomy" id="9601"/>
    <lineage>
        <taxon>Eukaryota</taxon>
        <taxon>Metazoa</taxon>
        <taxon>Chordata</taxon>
        <taxon>Craniata</taxon>
        <taxon>Vertebrata</taxon>
        <taxon>Euteleostomi</taxon>
        <taxon>Mammalia</taxon>
        <taxon>Eutheria</taxon>
        <taxon>Euarchontoglires</taxon>
        <taxon>Primates</taxon>
        <taxon>Haplorrhini</taxon>
        <taxon>Catarrhini</taxon>
        <taxon>Hominidae</taxon>
        <taxon>Pongo</taxon>
    </lineage>
</organism>
<sequence length="163" mass="19649">MRIEKCYFCSGPIYPGHGMMFVRNDCKVFRFCKSKCHKNFKKRRNPRKVRWTKAFRKAAGKELTVDNSFEFEKRRNEPIKYQRELWNKTIDAMKRVEEIKQKRQAKFIMNRLKKNKELQKVQDIKEVKQNIHLIRAPLAGKGKQLEEKMVQQLQEDVDMEDAP</sequence>
<gene>
    <name type="primary">RSL24D1</name>
</gene>
<keyword id="KW-0539">Nucleus</keyword>
<keyword id="KW-1185">Reference proteome</keyword>
<keyword id="KW-0690">Ribosome biogenesis</keyword>
<proteinExistence type="evidence at transcript level"/>